<name>CLVS1_PONAB</name>
<accession>Q5RCA6</accession>
<proteinExistence type="evidence at transcript level"/>
<organism>
    <name type="scientific">Pongo abelii</name>
    <name type="common">Sumatran orangutan</name>
    <name type="synonym">Pongo pygmaeus abelii</name>
    <dbReference type="NCBI Taxonomy" id="9601"/>
    <lineage>
        <taxon>Eukaryota</taxon>
        <taxon>Metazoa</taxon>
        <taxon>Chordata</taxon>
        <taxon>Craniata</taxon>
        <taxon>Vertebrata</taxon>
        <taxon>Euteleostomi</taxon>
        <taxon>Mammalia</taxon>
        <taxon>Eutheria</taxon>
        <taxon>Euarchontoglires</taxon>
        <taxon>Primates</taxon>
        <taxon>Haplorrhini</taxon>
        <taxon>Catarrhini</taxon>
        <taxon>Hominidae</taxon>
        <taxon>Pongo</taxon>
    </lineage>
</organism>
<keyword id="KW-0968">Cytoplasmic vesicle</keyword>
<keyword id="KW-0967">Endosome</keyword>
<keyword id="KW-0333">Golgi apparatus</keyword>
<keyword id="KW-0446">Lipid-binding</keyword>
<keyword id="KW-0472">Membrane</keyword>
<keyword id="KW-1185">Reference proteome</keyword>
<gene>
    <name type="primary">CLVS1</name>
    <name type="synonym">RLBP1L1</name>
</gene>
<comment type="function">
    <text evidence="1">Required for normal morphology of late endosomes and/or lysosomes in neurons. Binds phosphatidylinositol 3,5-bisphosphate (PtdIns(3,5)P2) (By similarity).</text>
</comment>
<comment type="subunit">
    <text evidence="1">Forms a complex with clathrin heavy chain and gamma-adaptin.</text>
</comment>
<comment type="subcellular location">
    <subcellularLocation>
        <location evidence="1">Golgi apparatus</location>
        <location evidence="1">trans-Golgi network membrane</location>
        <topology evidence="1">Peripheral membrane protein</topology>
    </subcellularLocation>
    <subcellularLocation>
        <location evidence="1">Early endosome membrane</location>
        <topology evidence="1">Peripheral membrane protein</topology>
    </subcellularLocation>
    <subcellularLocation>
        <location evidence="1">Cytoplasmic vesicle</location>
        <location evidence="1">Clathrin-coated vesicle</location>
    </subcellularLocation>
</comment>
<comment type="domain">
    <text evidence="1">The CRAL-TRIO domain is required for targeting to the membrane and for binding PtdIns(3,5)P2.</text>
</comment>
<comment type="miscellaneous">
    <text evidence="1">Binding to PtdIns(3,5)P2 is not required for localization.</text>
</comment>
<reference key="1">
    <citation type="submission" date="2004-11" db="EMBL/GenBank/DDBJ databases">
        <authorList>
            <consortium name="The German cDNA consortium"/>
        </authorList>
    </citation>
    <scope>NUCLEOTIDE SEQUENCE [LARGE SCALE MRNA]</scope>
    <source>
        <tissue>Brain cortex</tissue>
    </source>
</reference>
<sequence length="354" mass="40802">MGPVSLLPKYQKLNTWNGDLAKMTHLQAGLSPETIEKARLELNENPDILHQDIQQVRDMIITRPDIGFLRTDDAFILRFLRARKFHQADAFRLLAQYFQYRQLNLDMFKNFKADDPGIKRALIDGFPGVLENRDHYGRKILLLFAANWDQSRNSFTDILRAILLSLEVLIEDPELQINGFILIIDWSNFSFKQASKLTPSILKLAIEGLQDSFPARFGGVHFVNQPWYIHALYTLIKPFLKDKTRKRIFLHGNNLNSLHQLIHPEFLPSEFGGTLPPYDMGTWARTLLGPDYSDENDYTHTSYNAMHVKHTSSNLERECSPKLMKRSQSVVEAGTLKHEEKGENENTQPLLALD</sequence>
<feature type="chain" id="PRO_0000297657" description="Clavesin-1">
    <location>
        <begin position="1"/>
        <end position="354"/>
    </location>
</feature>
<feature type="domain" description="CRAL-TRIO" evidence="2">
    <location>
        <begin position="118"/>
        <end position="279"/>
    </location>
</feature>
<feature type="region of interest" description="Disordered" evidence="3">
    <location>
        <begin position="333"/>
        <end position="354"/>
    </location>
</feature>
<feature type="compositionally biased region" description="Basic and acidic residues" evidence="3">
    <location>
        <begin position="335"/>
        <end position="344"/>
    </location>
</feature>
<feature type="compositionally biased region" description="Polar residues" evidence="3">
    <location>
        <begin position="345"/>
        <end position="354"/>
    </location>
</feature>
<evidence type="ECO:0000250" key="1"/>
<evidence type="ECO:0000255" key="2">
    <source>
        <dbReference type="PROSITE-ProRule" id="PRU00056"/>
    </source>
</evidence>
<evidence type="ECO:0000256" key="3">
    <source>
        <dbReference type="SAM" id="MobiDB-lite"/>
    </source>
</evidence>
<dbReference type="EMBL" id="CR858372">
    <property type="protein sequence ID" value="CAH90601.1"/>
    <property type="molecule type" value="mRNA"/>
</dbReference>
<dbReference type="RefSeq" id="NP_001125325.1">
    <property type="nucleotide sequence ID" value="NM_001131853.1"/>
</dbReference>
<dbReference type="RefSeq" id="XP_009242108.1">
    <property type="nucleotide sequence ID" value="XM_009243833.1"/>
</dbReference>
<dbReference type="RefSeq" id="XP_054416834.1">
    <property type="nucleotide sequence ID" value="XM_054560859.2"/>
</dbReference>
<dbReference type="RefSeq" id="XP_054416835.1">
    <property type="nucleotide sequence ID" value="XM_054560860.2"/>
</dbReference>
<dbReference type="RefSeq" id="XP_063582351.1">
    <property type="nucleotide sequence ID" value="XM_063726281.1"/>
</dbReference>
<dbReference type="SMR" id="Q5RCA6"/>
<dbReference type="FunCoup" id="Q5RCA6">
    <property type="interactions" value="287"/>
</dbReference>
<dbReference type="STRING" id="9601.ENSPPYP00000020881"/>
<dbReference type="Ensembl" id="ENSPPYT00000021715.3">
    <property type="protein sequence ID" value="ENSPPYP00000020881.2"/>
    <property type="gene ID" value="ENSPPYG00000018621.3"/>
</dbReference>
<dbReference type="GeneID" id="100172224"/>
<dbReference type="KEGG" id="pon:100172224"/>
<dbReference type="CTD" id="157807"/>
<dbReference type="eggNOG" id="KOG1471">
    <property type="taxonomic scope" value="Eukaryota"/>
</dbReference>
<dbReference type="GeneTree" id="ENSGT00940000159947"/>
<dbReference type="HOGENOM" id="CLU_046597_1_3_1"/>
<dbReference type="InParanoid" id="Q5RCA6"/>
<dbReference type="OMA" id="DSAKMTH"/>
<dbReference type="OrthoDB" id="7837562at2759"/>
<dbReference type="Proteomes" id="UP000001595">
    <property type="component" value="Chromosome 8"/>
</dbReference>
<dbReference type="GO" id="GO:0030136">
    <property type="term" value="C:clathrin-coated vesicle"/>
    <property type="evidence" value="ECO:0000250"/>
    <property type="project" value="UniProtKB"/>
</dbReference>
<dbReference type="GO" id="GO:0031901">
    <property type="term" value="C:early endosome membrane"/>
    <property type="evidence" value="ECO:0007669"/>
    <property type="project" value="UniProtKB-SubCell"/>
</dbReference>
<dbReference type="GO" id="GO:0005768">
    <property type="term" value="C:endosome"/>
    <property type="evidence" value="ECO:0000250"/>
    <property type="project" value="UniProtKB"/>
</dbReference>
<dbReference type="GO" id="GO:0005802">
    <property type="term" value="C:trans-Golgi network"/>
    <property type="evidence" value="ECO:0000250"/>
    <property type="project" value="UniProtKB"/>
</dbReference>
<dbReference type="GO" id="GO:0080025">
    <property type="term" value="F:phosphatidylinositol-3,5-bisphosphate binding"/>
    <property type="evidence" value="ECO:0000250"/>
    <property type="project" value="UniProtKB"/>
</dbReference>
<dbReference type="GO" id="GO:0007040">
    <property type="term" value="P:lysosome organization"/>
    <property type="evidence" value="ECO:0000250"/>
    <property type="project" value="UniProtKB"/>
</dbReference>
<dbReference type="CDD" id="cd00170">
    <property type="entry name" value="SEC14"/>
    <property type="match status" value="1"/>
</dbReference>
<dbReference type="FunFam" id="1.10.8.20:FF:000001">
    <property type="entry name" value="Alpha-tocopherol transfer protein-like"/>
    <property type="match status" value="1"/>
</dbReference>
<dbReference type="FunFam" id="3.40.525.10:FF:000002">
    <property type="entry name" value="Alpha-tocopherol transfer protein-like"/>
    <property type="match status" value="1"/>
</dbReference>
<dbReference type="Gene3D" id="1.20.5.1200">
    <property type="entry name" value="Alpha-tocopherol transfer"/>
    <property type="match status" value="1"/>
</dbReference>
<dbReference type="Gene3D" id="3.40.525.10">
    <property type="entry name" value="CRAL-TRIO lipid binding domain"/>
    <property type="match status" value="1"/>
</dbReference>
<dbReference type="Gene3D" id="1.10.8.20">
    <property type="entry name" value="N-terminal domain of phosphatidylinositol transfer protein sec14p"/>
    <property type="match status" value="1"/>
</dbReference>
<dbReference type="InterPro" id="IPR001251">
    <property type="entry name" value="CRAL-TRIO_dom"/>
</dbReference>
<dbReference type="InterPro" id="IPR036865">
    <property type="entry name" value="CRAL-TRIO_dom_sf"/>
</dbReference>
<dbReference type="InterPro" id="IPR011074">
    <property type="entry name" value="CRAL/TRIO_N_dom"/>
</dbReference>
<dbReference type="InterPro" id="IPR036273">
    <property type="entry name" value="CRAL/TRIO_N_dom_sf"/>
</dbReference>
<dbReference type="PANTHER" id="PTHR10174">
    <property type="entry name" value="ALPHA-TOCOPHEROL TRANSFER PROTEIN-RELATED"/>
    <property type="match status" value="1"/>
</dbReference>
<dbReference type="PANTHER" id="PTHR10174:SF72">
    <property type="entry name" value="CLAVESIN-1"/>
    <property type="match status" value="1"/>
</dbReference>
<dbReference type="Pfam" id="PF00650">
    <property type="entry name" value="CRAL_TRIO"/>
    <property type="match status" value="1"/>
</dbReference>
<dbReference type="Pfam" id="PF03765">
    <property type="entry name" value="CRAL_TRIO_N"/>
    <property type="match status" value="1"/>
</dbReference>
<dbReference type="PRINTS" id="PR00180">
    <property type="entry name" value="CRETINALDHBP"/>
</dbReference>
<dbReference type="SMART" id="SM01100">
    <property type="entry name" value="CRAL_TRIO_N"/>
    <property type="match status" value="1"/>
</dbReference>
<dbReference type="SMART" id="SM00516">
    <property type="entry name" value="SEC14"/>
    <property type="match status" value="1"/>
</dbReference>
<dbReference type="SUPFAM" id="SSF52087">
    <property type="entry name" value="CRAL/TRIO domain"/>
    <property type="match status" value="1"/>
</dbReference>
<dbReference type="SUPFAM" id="SSF46938">
    <property type="entry name" value="CRAL/TRIO N-terminal domain"/>
    <property type="match status" value="1"/>
</dbReference>
<dbReference type="PROSITE" id="PS50191">
    <property type="entry name" value="CRAL_TRIO"/>
    <property type="match status" value="1"/>
</dbReference>
<protein>
    <recommendedName>
        <fullName>Clavesin-1</fullName>
    </recommendedName>
    <alternativeName>
        <fullName>Retinaldehyde-binding protein 1-like 1</fullName>
    </alternativeName>
</protein>